<sequence>MEKVYGLIGFPVEHSLSPLMHNDAFARLGIPARYHLFSVEPGQVGAAIAGVRALGIAGVNVTIPHKLAVIPFLDEVDEHARRIGAVNTIINNDGRLVGYNTDGLGYVQALEEEMNITLDGKRILVIGAGGGARGIYFSLLSTAAERIDMANRTVEKAERLVREGDERRSAYFSLAEAETRLAEYDIIINTTSVGMHPRVEVQPLSLERLRPGVIVSDIIYNPLETKWLKEAKARGARVQNGVGMLVYQGALAFEKWTGQWPDVNRMKQLVIEALRR</sequence>
<organism>
    <name type="scientific">Geobacillus kaustophilus (strain HTA426)</name>
    <dbReference type="NCBI Taxonomy" id="235909"/>
    <lineage>
        <taxon>Bacteria</taxon>
        <taxon>Bacillati</taxon>
        <taxon>Bacillota</taxon>
        <taxon>Bacilli</taxon>
        <taxon>Bacillales</taxon>
        <taxon>Anoxybacillaceae</taxon>
        <taxon>Geobacillus</taxon>
        <taxon>Geobacillus thermoleovorans group</taxon>
    </lineage>
</organism>
<reference key="1">
    <citation type="journal article" date="2004" name="Nucleic Acids Res.">
        <title>Thermoadaptation trait revealed by the genome sequence of thermophilic Geobacillus kaustophilus.</title>
        <authorList>
            <person name="Takami H."/>
            <person name="Takaki Y."/>
            <person name="Chee G.-J."/>
            <person name="Nishi S."/>
            <person name="Shimamura S."/>
            <person name="Suzuki H."/>
            <person name="Matsui S."/>
            <person name="Uchiyama I."/>
        </authorList>
    </citation>
    <scope>NUCLEOTIDE SEQUENCE [LARGE SCALE GENOMIC DNA]</scope>
    <source>
        <strain>HTA426</strain>
    </source>
</reference>
<reference key="2">
    <citation type="submission" date="2007-02" db="PDB data bank">
        <title>Crystal structure of shikimate 5-dehydrogenase (AroE) from Geobacillus kaustophilus.</title>
        <authorList>
            <person name="Bagautdinov B."/>
            <person name="Kunishima N."/>
        </authorList>
    </citation>
    <scope>X-RAY CRYSTALLOGRAPHY (2.25 ANGSTROMS)</scope>
    <scope>SUBUNIT</scope>
</reference>
<accession>Q5KWX7</accession>
<protein>
    <recommendedName>
        <fullName evidence="1">Shikimate dehydrogenase (NADP(+))</fullName>
        <shortName evidence="1">SDH</shortName>
        <ecNumber evidence="1">1.1.1.25</ecNumber>
    </recommendedName>
</protein>
<comment type="function">
    <text evidence="1">Involved in the biosynthesis of the chorismate, which leads to the biosynthesis of aromatic amino acids. Catalyzes the reversible NADPH linked reduction of 3-dehydroshikimate (DHSA) to yield shikimate (SA).</text>
</comment>
<comment type="catalytic activity">
    <reaction evidence="1">
        <text>shikimate + NADP(+) = 3-dehydroshikimate + NADPH + H(+)</text>
        <dbReference type="Rhea" id="RHEA:17737"/>
        <dbReference type="ChEBI" id="CHEBI:15378"/>
        <dbReference type="ChEBI" id="CHEBI:16630"/>
        <dbReference type="ChEBI" id="CHEBI:36208"/>
        <dbReference type="ChEBI" id="CHEBI:57783"/>
        <dbReference type="ChEBI" id="CHEBI:58349"/>
        <dbReference type="EC" id="1.1.1.25"/>
    </reaction>
</comment>
<comment type="pathway">
    <text evidence="1">Metabolic intermediate biosynthesis; chorismate biosynthesis; chorismate from D-erythrose 4-phosphate and phosphoenolpyruvate: step 4/7.</text>
</comment>
<comment type="subunit">
    <text evidence="1 2">Homodimer.</text>
</comment>
<comment type="similarity">
    <text evidence="1">Belongs to the shikimate dehydrogenase family.</text>
</comment>
<gene>
    <name evidence="1" type="primary">aroE</name>
    <name type="ordered locus">GK2524</name>
</gene>
<keyword id="KW-0002">3D-structure</keyword>
<keyword id="KW-0028">Amino-acid biosynthesis</keyword>
<keyword id="KW-0057">Aromatic amino acid biosynthesis</keyword>
<keyword id="KW-0521">NADP</keyword>
<keyword id="KW-0560">Oxidoreductase</keyword>
<keyword id="KW-1185">Reference proteome</keyword>
<dbReference type="EC" id="1.1.1.25" evidence="1"/>
<dbReference type="EMBL" id="BA000043">
    <property type="protein sequence ID" value="BAD76809.1"/>
    <property type="molecule type" value="Genomic_DNA"/>
</dbReference>
<dbReference type="RefSeq" id="WP_011232003.1">
    <property type="nucleotide sequence ID" value="NC_006510.1"/>
</dbReference>
<dbReference type="PDB" id="2EGG">
    <property type="method" value="X-ray"/>
    <property type="resolution" value="2.25 A"/>
    <property type="chains" value="A/B=1-276"/>
</dbReference>
<dbReference type="PDBsum" id="2EGG"/>
<dbReference type="SMR" id="Q5KWX7"/>
<dbReference type="STRING" id="235909.GK2524"/>
<dbReference type="KEGG" id="gka:GK2524"/>
<dbReference type="eggNOG" id="COG0169">
    <property type="taxonomic scope" value="Bacteria"/>
</dbReference>
<dbReference type="HOGENOM" id="CLU_044063_4_1_9"/>
<dbReference type="UniPathway" id="UPA00053">
    <property type="reaction ID" value="UER00087"/>
</dbReference>
<dbReference type="EvolutionaryTrace" id="Q5KWX7"/>
<dbReference type="Proteomes" id="UP000001172">
    <property type="component" value="Chromosome"/>
</dbReference>
<dbReference type="GO" id="GO:0005829">
    <property type="term" value="C:cytosol"/>
    <property type="evidence" value="ECO:0007669"/>
    <property type="project" value="TreeGrafter"/>
</dbReference>
<dbReference type="GO" id="GO:0050661">
    <property type="term" value="F:NADP binding"/>
    <property type="evidence" value="ECO:0007669"/>
    <property type="project" value="InterPro"/>
</dbReference>
<dbReference type="GO" id="GO:0004764">
    <property type="term" value="F:shikimate 3-dehydrogenase (NADP+) activity"/>
    <property type="evidence" value="ECO:0007669"/>
    <property type="project" value="UniProtKB-UniRule"/>
</dbReference>
<dbReference type="GO" id="GO:0008652">
    <property type="term" value="P:amino acid biosynthetic process"/>
    <property type="evidence" value="ECO:0007669"/>
    <property type="project" value="UniProtKB-KW"/>
</dbReference>
<dbReference type="GO" id="GO:0009073">
    <property type="term" value="P:aromatic amino acid family biosynthetic process"/>
    <property type="evidence" value="ECO:0007669"/>
    <property type="project" value="UniProtKB-KW"/>
</dbReference>
<dbReference type="GO" id="GO:0009423">
    <property type="term" value="P:chorismate biosynthetic process"/>
    <property type="evidence" value="ECO:0007669"/>
    <property type="project" value="UniProtKB-UniRule"/>
</dbReference>
<dbReference type="GO" id="GO:0019632">
    <property type="term" value="P:shikimate metabolic process"/>
    <property type="evidence" value="ECO:0007669"/>
    <property type="project" value="InterPro"/>
</dbReference>
<dbReference type="CDD" id="cd01065">
    <property type="entry name" value="NAD_bind_Shikimate_DH"/>
    <property type="match status" value="1"/>
</dbReference>
<dbReference type="Gene3D" id="3.40.50.10860">
    <property type="entry name" value="Leucine Dehydrogenase, chain A, domain 1"/>
    <property type="match status" value="1"/>
</dbReference>
<dbReference type="Gene3D" id="3.40.50.720">
    <property type="entry name" value="NAD(P)-binding Rossmann-like Domain"/>
    <property type="match status" value="1"/>
</dbReference>
<dbReference type="HAMAP" id="MF_00222">
    <property type="entry name" value="Shikimate_DH_AroE"/>
    <property type="match status" value="1"/>
</dbReference>
<dbReference type="InterPro" id="IPR046346">
    <property type="entry name" value="Aminoacid_DH-like_N_sf"/>
</dbReference>
<dbReference type="InterPro" id="IPR036291">
    <property type="entry name" value="NAD(P)-bd_dom_sf"/>
</dbReference>
<dbReference type="InterPro" id="IPR041121">
    <property type="entry name" value="SDH_C"/>
</dbReference>
<dbReference type="InterPro" id="IPR011342">
    <property type="entry name" value="Shikimate_DH"/>
</dbReference>
<dbReference type="InterPro" id="IPR013708">
    <property type="entry name" value="Shikimate_DH-bd_N"/>
</dbReference>
<dbReference type="InterPro" id="IPR022893">
    <property type="entry name" value="Shikimate_DH_fam"/>
</dbReference>
<dbReference type="InterPro" id="IPR006151">
    <property type="entry name" value="Shikm_DH/Glu-tRNA_Rdtase"/>
</dbReference>
<dbReference type="NCBIfam" id="TIGR00507">
    <property type="entry name" value="aroE"/>
    <property type="match status" value="1"/>
</dbReference>
<dbReference type="NCBIfam" id="NF001319">
    <property type="entry name" value="PRK00258.3-3"/>
    <property type="match status" value="1"/>
</dbReference>
<dbReference type="PANTHER" id="PTHR21089:SF1">
    <property type="entry name" value="BIFUNCTIONAL 3-DEHYDROQUINATE DEHYDRATASE_SHIKIMATE DEHYDROGENASE, CHLOROPLASTIC"/>
    <property type="match status" value="1"/>
</dbReference>
<dbReference type="PANTHER" id="PTHR21089">
    <property type="entry name" value="SHIKIMATE DEHYDROGENASE"/>
    <property type="match status" value="1"/>
</dbReference>
<dbReference type="Pfam" id="PF18317">
    <property type="entry name" value="SDH_C"/>
    <property type="match status" value="1"/>
</dbReference>
<dbReference type="Pfam" id="PF01488">
    <property type="entry name" value="Shikimate_DH"/>
    <property type="match status" value="1"/>
</dbReference>
<dbReference type="Pfam" id="PF08501">
    <property type="entry name" value="Shikimate_dh_N"/>
    <property type="match status" value="1"/>
</dbReference>
<dbReference type="SUPFAM" id="SSF53223">
    <property type="entry name" value="Aminoacid dehydrogenase-like, N-terminal domain"/>
    <property type="match status" value="1"/>
</dbReference>
<dbReference type="SUPFAM" id="SSF51735">
    <property type="entry name" value="NAD(P)-binding Rossmann-fold domains"/>
    <property type="match status" value="1"/>
</dbReference>
<feature type="chain" id="PRO_0000431402" description="Shikimate dehydrogenase (NADP(+))">
    <location>
        <begin position="1"/>
        <end position="276"/>
    </location>
</feature>
<feature type="active site" description="Proton acceptor" evidence="1">
    <location>
        <position position="66"/>
    </location>
</feature>
<feature type="binding site" evidence="1">
    <location>
        <begin position="15"/>
        <end position="17"/>
    </location>
    <ligand>
        <name>shikimate</name>
        <dbReference type="ChEBI" id="CHEBI:36208"/>
    </ligand>
</feature>
<feature type="binding site" evidence="1">
    <location>
        <position position="62"/>
    </location>
    <ligand>
        <name>shikimate</name>
        <dbReference type="ChEBI" id="CHEBI:36208"/>
    </ligand>
</feature>
<feature type="binding site" evidence="1">
    <location>
        <position position="78"/>
    </location>
    <ligand>
        <name>NADP(+)</name>
        <dbReference type="ChEBI" id="CHEBI:58349"/>
    </ligand>
</feature>
<feature type="binding site" evidence="1">
    <location>
        <position position="87"/>
    </location>
    <ligand>
        <name>shikimate</name>
        <dbReference type="ChEBI" id="CHEBI:36208"/>
    </ligand>
</feature>
<feature type="binding site" evidence="1">
    <location>
        <position position="102"/>
    </location>
    <ligand>
        <name>shikimate</name>
        <dbReference type="ChEBI" id="CHEBI:36208"/>
    </ligand>
</feature>
<feature type="binding site" evidence="1">
    <location>
        <begin position="151"/>
        <end position="156"/>
    </location>
    <ligand>
        <name>NADP(+)</name>
        <dbReference type="ChEBI" id="CHEBI:58349"/>
    </ligand>
</feature>
<feature type="binding site" evidence="1">
    <location>
        <position position="218"/>
    </location>
    <ligand>
        <name>NADP(+)</name>
        <dbReference type="ChEBI" id="CHEBI:58349"/>
    </ligand>
</feature>
<feature type="binding site" evidence="1">
    <location>
        <position position="220"/>
    </location>
    <ligand>
        <name>shikimate</name>
        <dbReference type="ChEBI" id="CHEBI:36208"/>
    </ligand>
</feature>
<feature type="binding site" evidence="1">
    <location>
        <position position="241"/>
    </location>
    <ligand>
        <name>NADP(+)</name>
        <dbReference type="ChEBI" id="CHEBI:58349"/>
    </ligand>
</feature>
<feature type="strand" evidence="3">
    <location>
        <begin position="3"/>
        <end position="11"/>
    </location>
</feature>
<feature type="helix" evidence="3">
    <location>
        <begin position="17"/>
        <end position="27"/>
    </location>
</feature>
<feature type="strand" evidence="3">
    <location>
        <begin position="32"/>
        <end position="38"/>
    </location>
</feature>
<feature type="helix" evidence="3">
    <location>
        <begin position="44"/>
        <end position="54"/>
    </location>
</feature>
<feature type="strand" evidence="3">
    <location>
        <begin position="58"/>
        <end position="61"/>
    </location>
</feature>
<feature type="turn" evidence="3">
    <location>
        <begin position="66"/>
        <end position="69"/>
    </location>
</feature>
<feature type="helix" evidence="3">
    <location>
        <begin position="70"/>
        <end position="72"/>
    </location>
</feature>
<feature type="strand" evidence="3">
    <location>
        <begin position="74"/>
        <end position="76"/>
    </location>
</feature>
<feature type="helix" evidence="3">
    <location>
        <begin position="78"/>
        <end position="83"/>
    </location>
</feature>
<feature type="strand" evidence="3">
    <location>
        <begin position="88"/>
        <end position="92"/>
    </location>
</feature>
<feature type="strand" evidence="3">
    <location>
        <begin position="95"/>
        <end position="99"/>
    </location>
</feature>
<feature type="helix" evidence="3">
    <location>
        <begin position="102"/>
        <end position="113"/>
    </location>
</feature>
<feature type="strand" evidence="3">
    <location>
        <begin position="122"/>
        <end position="126"/>
    </location>
</feature>
<feature type="helix" evidence="3">
    <location>
        <begin position="130"/>
        <end position="140"/>
    </location>
</feature>
<feature type="turn" evidence="3">
    <location>
        <begin position="141"/>
        <end position="143"/>
    </location>
</feature>
<feature type="strand" evidence="3">
    <location>
        <begin position="145"/>
        <end position="150"/>
    </location>
</feature>
<feature type="helix" evidence="3">
    <location>
        <begin position="154"/>
        <end position="163"/>
    </location>
</feature>
<feature type="strand" evidence="3">
    <location>
        <begin position="166"/>
        <end position="168"/>
    </location>
</feature>
<feature type="helix" evidence="3">
    <location>
        <begin position="174"/>
        <end position="179"/>
    </location>
</feature>
<feature type="helix" evidence="3">
    <location>
        <begin position="181"/>
        <end position="183"/>
    </location>
</feature>
<feature type="strand" evidence="3">
    <location>
        <begin position="185"/>
        <end position="189"/>
    </location>
</feature>
<feature type="strand" evidence="3">
    <location>
        <begin position="214"/>
        <end position="217"/>
    </location>
</feature>
<feature type="strand" evidence="3">
    <location>
        <begin position="221"/>
        <end position="224"/>
    </location>
</feature>
<feature type="helix" evidence="3">
    <location>
        <begin position="226"/>
        <end position="233"/>
    </location>
</feature>
<feature type="strand" evidence="3">
    <location>
        <begin position="237"/>
        <end position="239"/>
    </location>
</feature>
<feature type="helix" evidence="3">
    <location>
        <begin position="242"/>
        <end position="257"/>
    </location>
</feature>
<feature type="helix" evidence="3">
    <location>
        <begin position="263"/>
        <end position="275"/>
    </location>
</feature>
<evidence type="ECO:0000255" key="1">
    <source>
        <dbReference type="HAMAP-Rule" id="MF_00222"/>
    </source>
</evidence>
<evidence type="ECO:0000269" key="2">
    <source ref="2"/>
</evidence>
<evidence type="ECO:0007829" key="3">
    <source>
        <dbReference type="PDB" id="2EGG"/>
    </source>
</evidence>
<name>AROE_GEOKA</name>
<proteinExistence type="evidence at protein level"/>